<sequence>MLAKQIKKANSRSTLLRKSLLFAAPIILAVSSSSVYALTQVSNFGTNPGNLQMFKHVPSGMPANAPLVVALHGCTQTAAAYEASGWSALGNTHKFYVVYPQQQSGNNSNKCFNWFEPGDITRGQGEALSIKQMVDNMKANHSIDPSRVYVTGLSAGAFMTTVMAATYPDVFAGAAPIAGGPYKCATSMTSAFTCMSPGVDKTPAAWGDLARGGYSGYNGPKPKISIWHGSSDYTVAPANQNETVEQFTNYHGIDQTPDVSDTVGGFPHKVYKSANGTPLVETYTITGMGHGTPVDPGTGANQCGTAGAYILDVNVCSSYYIGQFFGIIGGGGTTTTTTSGNVTTTTAATTTTTTATQGYTQTTSATVTNHYVAGRINVTQYNVLGARYGYVTTIPLYYCPSLSGWTDKANCSPI</sequence>
<evidence type="ECO:0000250" key="1"/>
<evidence type="ECO:0000255" key="2"/>
<evidence type="ECO:0000305" key="3"/>
<proteinExistence type="inferred from homology"/>
<protein>
    <recommendedName>
        <fullName>Poly(3-hydroxyalkanoate) depolymerase C</fullName>
        <shortName>PHA depolymerase</shortName>
        <ecNumber>3.1.1.-</ecNumber>
    </recommendedName>
    <alternativeName>
        <fullName>PHB depolymerase</fullName>
    </alternativeName>
</protein>
<feature type="signal peptide" evidence="2">
    <location>
        <begin position="1"/>
        <end position="37"/>
    </location>
</feature>
<feature type="chain" id="PRO_0000017728" description="Poly(3-hydroxyalkanoate) depolymerase C">
    <location>
        <begin position="38"/>
        <end position="414"/>
    </location>
</feature>
<feature type="active site" description="Charge relay system" evidence="1">
    <location>
        <position position="154"/>
    </location>
</feature>
<dbReference type="EC" id="3.1.1.-"/>
<dbReference type="EMBL" id="Z22595">
    <property type="protein sequence ID" value="CAA80310.1"/>
    <property type="molecule type" value="Genomic_DNA"/>
</dbReference>
<dbReference type="PIR" id="S39530">
    <property type="entry name" value="S39530"/>
</dbReference>
<dbReference type="SMR" id="P52090"/>
<dbReference type="ESTHER" id="psele-pha1">
    <property type="family name" value="Esterase_phb"/>
</dbReference>
<dbReference type="OrthoDB" id="9764953at2"/>
<dbReference type="BRENDA" id="3.1.1.75">
    <property type="organism ID" value="5133"/>
</dbReference>
<dbReference type="GO" id="GO:0005576">
    <property type="term" value="C:extracellular region"/>
    <property type="evidence" value="ECO:0007669"/>
    <property type="project" value="UniProtKB-SubCell"/>
</dbReference>
<dbReference type="GO" id="GO:0016787">
    <property type="term" value="F:hydrolase activity"/>
    <property type="evidence" value="ECO:0007669"/>
    <property type="project" value="UniProtKB-KW"/>
</dbReference>
<dbReference type="GO" id="GO:0016042">
    <property type="term" value="P:lipid catabolic process"/>
    <property type="evidence" value="ECO:0007669"/>
    <property type="project" value="UniProtKB-KW"/>
</dbReference>
<dbReference type="Gene3D" id="3.40.50.1820">
    <property type="entry name" value="alpha/beta hydrolase"/>
    <property type="match status" value="1"/>
</dbReference>
<dbReference type="InterPro" id="IPR029058">
    <property type="entry name" value="AB_hydrolase_fold"/>
</dbReference>
<dbReference type="InterPro" id="IPR010126">
    <property type="entry name" value="Esterase_phb"/>
</dbReference>
<dbReference type="InterPro" id="IPR050955">
    <property type="entry name" value="Plant_Biomass_Hydrol_Est"/>
</dbReference>
<dbReference type="NCBIfam" id="TIGR01840">
    <property type="entry name" value="esterase_phb"/>
    <property type="match status" value="1"/>
</dbReference>
<dbReference type="PANTHER" id="PTHR43037:SF1">
    <property type="entry name" value="BLL1128 PROTEIN"/>
    <property type="match status" value="1"/>
</dbReference>
<dbReference type="PANTHER" id="PTHR43037">
    <property type="entry name" value="UNNAMED PRODUCT-RELATED"/>
    <property type="match status" value="1"/>
</dbReference>
<dbReference type="Pfam" id="PF10503">
    <property type="entry name" value="Esterase_PHB"/>
    <property type="match status" value="1"/>
</dbReference>
<dbReference type="SUPFAM" id="SSF53474">
    <property type="entry name" value="alpha/beta-Hydrolases"/>
    <property type="match status" value="2"/>
</dbReference>
<comment type="function">
    <text>Specific for poly(hydroxyalkanoic acid) consisting of monomers of four or five carbon atoms and for P-nitrophenylbutyrate as substrates.</text>
</comment>
<comment type="subcellular location">
    <subcellularLocation>
        <location>Secreted</location>
    </subcellularLocation>
</comment>
<comment type="similarity">
    <text evidence="3">Belongs to the AB hydrolase superfamily. Lipase family.</text>
</comment>
<keyword id="KW-0378">Hydrolase</keyword>
<keyword id="KW-0442">Lipid degradation</keyword>
<keyword id="KW-0443">Lipid metabolism</keyword>
<keyword id="KW-0964">Secreted</keyword>
<keyword id="KW-0732">Signal</keyword>
<name>PHA1_PAULE</name>
<accession>P52090</accession>
<gene>
    <name type="primary">phaZ1</name>
</gene>
<organism>
    <name type="scientific">Paucimonas lemoignei</name>
    <name type="common">Pseudomonas lemoignei</name>
    <dbReference type="NCBI Taxonomy" id="29443"/>
    <lineage>
        <taxon>Bacteria</taxon>
        <taxon>Pseudomonadati</taxon>
        <taxon>Pseudomonadota</taxon>
        <taxon>Betaproteobacteria</taxon>
        <taxon>Burkholderiales</taxon>
        <taxon>Burkholderiaceae</taxon>
        <taxon>Paucimonas</taxon>
    </lineage>
</organism>
<reference key="1">
    <citation type="journal article" date="1993" name="Eur. J. Biochem.">
        <title>Cloning and characterization of the poly(hydroxyalkanoic acid)-depolymerase gene locus, phaZ1, of Pseudomonas lemoignei and its gene product.</title>
        <authorList>
            <person name="Jendrossek D."/>
            <person name="Mueller B."/>
            <person name="Schlegel G."/>
        </authorList>
    </citation>
    <scope>NUCLEOTIDE SEQUENCE [GENOMIC DNA]</scope>
</reference>